<name>DLTA_STRR6</name>
<reference key="1">
    <citation type="journal article" date="2001" name="J. Bacteriol.">
        <title>Genome of the bacterium Streptococcus pneumoniae strain R6.</title>
        <authorList>
            <person name="Hoskins J."/>
            <person name="Alborn W.E. Jr."/>
            <person name="Arnold J."/>
            <person name="Blaszczak L.C."/>
            <person name="Burgett S."/>
            <person name="DeHoff B.S."/>
            <person name="Estrem S.T."/>
            <person name="Fritz L."/>
            <person name="Fu D.-J."/>
            <person name="Fuller W."/>
            <person name="Geringer C."/>
            <person name="Gilmour R."/>
            <person name="Glass J.S."/>
            <person name="Khoja H."/>
            <person name="Kraft A.R."/>
            <person name="Lagace R.E."/>
            <person name="LeBlanc D.J."/>
            <person name="Lee L.N."/>
            <person name="Lefkowitz E.J."/>
            <person name="Lu J."/>
            <person name="Matsushima P."/>
            <person name="McAhren S.M."/>
            <person name="McHenney M."/>
            <person name="McLeaster K."/>
            <person name="Mundy C.W."/>
            <person name="Nicas T.I."/>
            <person name="Norris F.H."/>
            <person name="O'Gara M."/>
            <person name="Peery R.B."/>
            <person name="Robertson G.T."/>
            <person name="Rockey P."/>
            <person name="Sun P.-M."/>
            <person name="Winkler M.E."/>
            <person name="Yang Y."/>
            <person name="Young-Bellido M."/>
            <person name="Zhao G."/>
            <person name="Zook C.A."/>
            <person name="Baltz R.H."/>
            <person name="Jaskunas S.R."/>
            <person name="Rosteck P.R. Jr."/>
            <person name="Skatrud P.L."/>
            <person name="Glass J.I."/>
        </authorList>
    </citation>
    <scope>NUCLEOTIDE SEQUENCE [LARGE SCALE GENOMIC DNA]</scope>
    <source>
        <strain>ATCC BAA-255 / R6</strain>
    </source>
</reference>
<gene>
    <name evidence="1" type="primary">dltA</name>
    <name type="ordered locus">spr1982</name>
</gene>
<feature type="chain" id="PRO_0000213164" description="D-alanine--D-alanyl carrier protein ligase">
    <location>
        <begin position="1"/>
        <end position="516"/>
    </location>
</feature>
<feature type="binding site" evidence="1">
    <location>
        <begin position="156"/>
        <end position="157"/>
    </location>
    <ligand>
        <name>ATP</name>
        <dbReference type="ChEBI" id="CHEBI:30616"/>
    </ligand>
</feature>
<feature type="binding site" evidence="1">
    <location>
        <position position="203"/>
    </location>
    <ligand>
        <name>D-alanine</name>
        <dbReference type="ChEBI" id="CHEBI:57416"/>
    </ligand>
</feature>
<feature type="binding site" evidence="1">
    <location>
        <begin position="298"/>
        <end position="303"/>
    </location>
    <ligand>
        <name>ATP</name>
        <dbReference type="ChEBI" id="CHEBI:30616"/>
    </ligand>
</feature>
<feature type="binding site" evidence="1">
    <location>
        <position position="307"/>
    </location>
    <ligand>
        <name>D-alanine</name>
        <dbReference type="ChEBI" id="CHEBI:57416"/>
    </ligand>
</feature>
<feature type="binding site" evidence="1">
    <location>
        <position position="389"/>
    </location>
    <ligand>
        <name>ATP</name>
        <dbReference type="ChEBI" id="CHEBI:30616"/>
    </ligand>
</feature>
<feature type="binding site" evidence="1">
    <location>
        <begin position="401"/>
        <end position="404"/>
    </location>
    <ligand>
        <name>ATP</name>
        <dbReference type="ChEBI" id="CHEBI:30616"/>
    </ligand>
</feature>
<feature type="binding site" evidence="1">
    <location>
        <position position="503"/>
    </location>
    <ligand>
        <name>ATP</name>
        <dbReference type="ChEBI" id="CHEBI:30616"/>
    </ligand>
</feature>
<feature type="binding site" evidence="1">
    <location>
        <position position="503"/>
    </location>
    <ligand>
        <name>D-alanine</name>
        <dbReference type="ChEBI" id="CHEBI:57416"/>
    </ligand>
</feature>
<dbReference type="EC" id="6.2.1.54" evidence="1"/>
<dbReference type="EMBL" id="AE007317">
    <property type="protein sequence ID" value="AAL00784.1"/>
    <property type="status" value="ALT_SEQ"/>
    <property type="molecule type" value="Genomic_DNA"/>
</dbReference>
<dbReference type="PIR" id="C98119">
    <property type="entry name" value="C98119"/>
</dbReference>
<dbReference type="RefSeq" id="NP_359573.1">
    <property type="nucleotide sequence ID" value="NC_003098.1"/>
</dbReference>
<dbReference type="RefSeq" id="WP_010976676.1">
    <property type="nucleotide sequence ID" value="NC_003098.1"/>
</dbReference>
<dbReference type="SMR" id="P0A399"/>
<dbReference type="STRING" id="171101.spr1982"/>
<dbReference type="KEGG" id="spr:spr1982"/>
<dbReference type="PATRIC" id="fig|171101.6.peg.2145"/>
<dbReference type="eggNOG" id="COG1020">
    <property type="taxonomic scope" value="Bacteria"/>
</dbReference>
<dbReference type="HOGENOM" id="CLU_000022_2_12_9"/>
<dbReference type="BioCyc" id="MetaCyc:MONOMER-20020"/>
<dbReference type="UniPathway" id="UPA00556"/>
<dbReference type="Proteomes" id="UP000000586">
    <property type="component" value="Chromosome"/>
</dbReference>
<dbReference type="GO" id="GO:0005737">
    <property type="term" value="C:cytoplasm"/>
    <property type="evidence" value="ECO:0007669"/>
    <property type="project" value="UniProtKB-SubCell"/>
</dbReference>
<dbReference type="GO" id="GO:0005524">
    <property type="term" value="F:ATP binding"/>
    <property type="evidence" value="ECO:0007669"/>
    <property type="project" value="UniProtKB-KW"/>
</dbReference>
<dbReference type="GO" id="GO:0047473">
    <property type="term" value="F:D-alanine [D-alanyl carrier protein] ligase activity"/>
    <property type="evidence" value="ECO:0007669"/>
    <property type="project" value="UniProtKB-UniRule"/>
</dbReference>
<dbReference type="GO" id="GO:0070395">
    <property type="term" value="P:lipoteichoic acid biosynthetic process"/>
    <property type="evidence" value="ECO:0007669"/>
    <property type="project" value="UniProtKB-UniRule"/>
</dbReference>
<dbReference type="CDD" id="cd05945">
    <property type="entry name" value="DltA"/>
    <property type="match status" value="1"/>
</dbReference>
<dbReference type="FunFam" id="3.30.300.30:FF:000012">
    <property type="entry name" value="D-alanine--D-alanyl carrier protein ligase"/>
    <property type="match status" value="1"/>
</dbReference>
<dbReference type="Gene3D" id="3.30.300.30">
    <property type="match status" value="1"/>
</dbReference>
<dbReference type="Gene3D" id="3.40.50.12780">
    <property type="entry name" value="N-terminal domain of ligase-like"/>
    <property type="match status" value="1"/>
</dbReference>
<dbReference type="HAMAP" id="MF_00593">
    <property type="entry name" value="DltA"/>
    <property type="match status" value="1"/>
</dbReference>
<dbReference type="InterPro" id="IPR010071">
    <property type="entry name" value="AA_adenyl_dom"/>
</dbReference>
<dbReference type="InterPro" id="IPR025110">
    <property type="entry name" value="AMP-bd_C"/>
</dbReference>
<dbReference type="InterPro" id="IPR045851">
    <property type="entry name" value="AMP-bd_C_sf"/>
</dbReference>
<dbReference type="InterPro" id="IPR020845">
    <property type="entry name" value="AMP-binding_CS"/>
</dbReference>
<dbReference type="InterPro" id="IPR000873">
    <property type="entry name" value="AMP-dep_synth/lig_dom"/>
</dbReference>
<dbReference type="InterPro" id="IPR042099">
    <property type="entry name" value="ANL_N_sf"/>
</dbReference>
<dbReference type="InterPro" id="IPR010072">
    <property type="entry name" value="DltA"/>
</dbReference>
<dbReference type="InterPro" id="IPR044507">
    <property type="entry name" value="DltA-like"/>
</dbReference>
<dbReference type="NCBIfam" id="TIGR01733">
    <property type="entry name" value="AA-adenyl-dom"/>
    <property type="match status" value="1"/>
</dbReference>
<dbReference type="NCBIfam" id="TIGR01734">
    <property type="entry name" value="D-ala-DACP-lig"/>
    <property type="match status" value="1"/>
</dbReference>
<dbReference type="NCBIfam" id="NF003417">
    <property type="entry name" value="PRK04813.1"/>
    <property type="match status" value="1"/>
</dbReference>
<dbReference type="PANTHER" id="PTHR45398">
    <property type="match status" value="1"/>
</dbReference>
<dbReference type="PANTHER" id="PTHR45398:SF1">
    <property type="entry name" value="ENZYME, PUTATIVE (JCVI)-RELATED"/>
    <property type="match status" value="1"/>
</dbReference>
<dbReference type="Pfam" id="PF00501">
    <property type="entry name" value="AMP-binding"/>
    <property type="match status" value="1"/>
</dbReference>
<dbReference type="Pfam" id="PF13193">
    <property type="entry name" value="AMP-binding_C"/>
    <property type="match status" value="1"/>
</dbReference>
<dbReference type="SUPFAM" id="SSF56801">
    <property type="entry name" value="Acetyl-CoA synthetase-like"/>
    <property type="match status" value="1"/>
</dbReference>
<dbReference type="PROSITE" id="PS00455">
    <property type="entry name" value="AMP_BINDING"/>
    <property type="match status" value="1"/>
</dbReference>
<keyword id="KW-0067">ATP-binding</keyword>
<keyword id="KW-0963">Cytoplasm</keyword>
<keyword id="KW-0436">Ligase</keyword>
<keyword id="KW-0547">Nucleotide-binding</keyword>
<keyword id="KW-1185">Reference proteome</keyword>
<proteinExistence type="inferred from homology"/>
<protein>
    <recommendedName>
        <fullName evidence="1">D-alanine--D-alanyl carrier protein ligase</fullName>
        <shortName evidence="1">DCL</shortName>
        <ecNumber evidence="1">6.2.1.54</ecNumber>
    </recommendedName>
    <alternativeName>
        <fullName evidence="1">D-alanine--poly(phosphoribitol) ligase subunit 1</fullName>
    </alternativeName>
    <alternativeName>
        <fullName evidence="1">D-alanine-activating enzyme</fullName>
        <shortName evidence="1">DAE</shortName>
    </alternativeName>
</protein>
<accession>P0A399</accession>
<accession>Q97N82</accession>
<sequence length="516" mass="57427">MSNKPIADMIETIEHFAQTQPSYPVYNVLGQEHTYGDLKADSDSLAAVIDQLGLPEKSPVVVFGGQEYEMLATFVALTKSGHAYIPIDSHSALERVSAILEVAEPSLIIAISAFPLEQVSTPMINLAQVQEAFAQGNNYEITHPVKGDDNYYIIFTSGTTGKPKGVQISHDNLLSFTNWMITDKEFATPSRPQMLAQPPYSFDLSVMYWAPTLALGGTLFTLPSVITQDFKQLFAAIFSLPIAIWTSTPSFADMAMLSEYFNSEKMPGITHFYFDGEELTVKTAQKLRERFPNARIINAYGPTEATVALSAVAVTDEMLATLKRLPIGYTKADSPTFIIDEEGNKLPNGEQGEIIVSGPAVSKGYMNNPEKTAEAFFEFEDLPAYHTGDVGTMTDEGLLLYGGRMDFQIKFNGYRIELEDVSQNLNKSRFIESAVAVPRYNKDHKVQNLLAYVILKDGVREQFERDIDITKAIKEDLTDIMMSYMMPSKFLYRDSLPLTPNGKIDIKGLINEVNKR</sequence>
<organism>
    <name type="scientific">Streptococcus pneumoniae (strain ATCC BAA-255 / R6)</name>
    <dbReference type="NCBI Taxonomy" id="171101"/>
    <lineage>
        <taxon>Bacteria</taxon>
        <taxon>Bacillati</taxon>
        <taxon>Bacillota</taxon>
        <taxon>Bacilli</taxon>
        <taxon>Lactobacillales</taxon>
        <taxon>Streptococcaceae</taxon>
        <taxon>Streptococcus</taxon>
    </lineage>
</organism>
<comment type="function">
    <text evidence="1">Catalyzes the first step in the D-alanylation of lipoteichoic acid (LTA), the activation of D-alanine and its transfer onto the D-alanyl carrier protein (Dcp) DltC. In an ATP-dependent two-step reaction, forms a high energy D-alanyl-AMP intermediate, followed by transfer of the D-alanyl residue as a thiol ester to the phosphopantheinyl prosthetic group of the Dcp. D-alanylation of LTA plays an important role in modulating the properties of the cell wall in Gram-positive bacteria, influencing the net charge of the cell wall.</text>
</comment>
<comment type="catalytic activity">
    <reaction evidence="1">
        <text>holo-[D-alanyl-carrier protein] + D-alanine + ATP = D-alanyl-[D-alanyl-carrier protein] + AMP + diphosphate</text>
        <dbReference type="Rhea" id="RHEA:55132"/>
        <dbReference type="Rhea" id="RHEA-COMP:14102"/>
        <dbReference type="Rhea" id="RHEA-COMP:14103"/>
        <dbReference type="ChEBI" id="CHEBI:30616"/>
        <dbReference type="ChEBI" id="CHEBI:33019"/>
        <dbReference type="ChEBI" id="CHEBI:57416"/>
        <dbReference type="ChEBI" id="CHEBI:64479"/>
        <dbReference type="ChEBI" id="CHEBI:138620"/>
        <dbReference type="ChEBI" id="CHEBI:456215"/>
        <dbReference type="EC" id="6.2.1.54"/>
    </reaction>
</comment>
<comment type="pathway">
    <text evidence="1">Cell wall biogenesis; lipoteichoic acid biosynthesis.</text>
</comment>
<comment type="subcellular location">
    <subcellularLocation>
        <location evidence="1">Cytoplasm</location>
    </subcellularLocation>
</comment>
<comment type="similarity">
    <text evidence="1">Belongs to the ATP-dependent AMP-binding enzyme family. DltA subfamily.</text>
</comment>
<comment type="sequence caution" evidence="2">
    <conflict type="erroneous termination">
        <sequence resource="EMBL-CDS" id="AAL00784"/>
    </conflict>
    <text>Truncated C-terminus.</text>
</comment>
<evidence type="ECO:0000255" key="1">
    <source>
        <dbReference type="HAMAP-Rule" id="MF_00593"/>
    </source>
</evidence>
<evidence type="ECO:0000305" key="2"/>